<name>RL16_ACISJ</name>
<dbReference type="EMBL" id="CP000539">
    <property type="protein sequence ID" value="ABM40539.1"/>
    <property type="molecule type" value="Genomic_DNA"/>
</dbReference>
<dbReference type="SMR" id="A1W2R4"/>
<dbReference type="STRING" id="232721.Ajs_0285"/>
<dbReference type="KEGG" id="ajs:Ajs_0285"/>
<dbReference type="eggNOG" id="COG0197">
    <property type="taxonomic scope" value="Bacteria"/>
</dbReference>
<dbReference type="HOGENOM" id="CLU_078858_2_1_4"/>
<dbReference type="Proteomes" id="UP000000645">
    <property type="component" value="Chromosome"/>
</dbReference>
<dbReference type="GO" id="GO:0022625">
    <property type="term" value="C:cytosolic large ribosomal subunit"/>
    <property type="evidence" value="ECO:0007669"/>
    <property type="project" value="TreeGrafter"/>
</dbReference>
<dbReference type="GO" id="GO:0019843">
    <property type="term" value="F:rRNA binding"/>
    <property type="evidence" value="ECO:0007669"/>
    <property type="project" value="UniProtKB-UniRule"/>
</dbReference>
<dbReference type="GO" id="GO:0003735">
    <property type="term" value="F:structural constituent of ribosome"/>
    <property type="evidence" value="ECO:0007669"/>
    <property type="project" value="InterPro"/>
</dbReference>
<dbReference type="GO" id="GO:0000049">
    <property type="term" value="F:tRNA binding"/>
    <property type="evidence" value="ECO:0007669"/>
    <property type="project" value="UniProtKB-KW"/>
</dbReference>
<dbReference type="GO" id="GO:0006412">
    <property type="term" value="P:translation"/>
    <property type="evidence" value="ECO:0007669"/>
    <property type="project" value="UniProtKB-UniRule"/>
</dbReference>
<dbReference type="CDD" id="cd01433">
    <property type="entry name" value="Ribosomal_L16_L10e"/>
    <property type="match status" value="1"/>
</dbReference>
<dbReference type="FunFam" id="3.90.1170.10:FF:000001">
    <property type="entry name" value="50S ribosomal protein L16"/>
    <property type="match status" value="1"/>
</dbReference>
<dbReference type="Gene3D" id="3.90.1170.10">
    <property type="entry name" value="Ribosomal protein L10e/L16"/>
    <property type="match status" value="1"/>
</dbReference>
<dbReference type="HAMAP" id="MF_01342">
    <property type="entry name" value="Ribosomal_uL16"/>
    <property type="match status" value="1"/>
</dbReference>
<dbReference type="InterPro" id="IPR047873">
    <property type="entry name" value="Ribosomal_uL16"/>
</dbReference>
<dbReference type="InterPro" id="IPR000114">
    <property type="entry name" value="Ribosomal_uL16_bact-type"/>
</dbReference>
<dbReference type="InterPro" id="IPR020798">
    <property type="entry name" value="Ribosomal_uL16_CS"/>
</dbReference>
<dbReference type="InterPro" id="IPR016180">
    <property type="entry name" value="Ribosomal_uL16_dom"/>
</dbReference>
<dbReference type="InterPro" id="IPR036920">
    <property type="entry name" value="Ribosomal_uL16_sf"/>
</dbReference>
<dbReference type="NCBIfam" id="TIGR01164">
    <property type="entry name" value="rplP_bact"/>
    <property type="match status" value="1"/>
</dbReference>
<dbReference type="PANTHER" id="PTHR12220">
    <property type="entry name" value="50S/60S RIBOSOMAL PROTEIN L16"/>
    <property type="match status" value="1"/>
</dbReference>
<dbReference type="PANTHER" id="PTHR12220:SF13">
    <property type="entry name" value="LARGE RIBOSOMAL SUBUNIT PROTEIN UL16M"/>
    <property type="match status" value="1"/>
</dbReference>
<dbReference type="Pfam" id="PF00252">
    <property type="entry name" value="Ribosomal_L16"/>
    <property type="match status" value="1"/>
</dbReference>
<dbReference type="PRINTS" id="PR00060">
    <property type="entry name" value="RIBOSOMALL16"/>
</dbReference>
<dbReference type="SUPFAM" id="SSF54686">
    <property type="entry name" value="Ribosomal protein L16p/L10e"/>
    <property type="match status" value="1"/>
</dbReference>
<dbReference type="PROSITE" id="PS00586">
    <property type="entry name" value="RIBOSOMAL_L16_1"/>
    <property type="match status" value="1"/>
</dbReference>
<proteinExistence type="inferred from homology"/>
<evidence type="ECO:0000255" key="1">
    <source>
        <dbReference type="HAMAP-Rule" id="MF_01342"/>
    </source>
</evidence>
<evidence type="ECO:0000256" key="2">
    <source>
        <dbReference type="SAM" id="MobiDB-lite"/>
    </source>
</evidence>
<evidence type="ECO:0000305" key="3"/>
<comment type="function">
    <text evidence="1">Binds 23S rRNA and is also seen to make contacts with the A and possibly P site tRNAs.</text>
</comment>
<comment type="subunit">
    <text evidence="1">Part of the 50S ribosomal subunit.</text>
</comment>
<comment type="similarity">
    <text evidence="1">Belongs to the universal ribosomal protein uL16 family.</text>
</comment>
<protein>
    <recommendedName>
        <fullName evidence="1">Large ribosomal subunit protein uL16</fullName>
    </recommendedName>
    <alternativeName>
        <fullName evidence="3">50S ribosomal protein L16</fullName>
    </alternativeName>
</protein>
<feature type="chain" id="PRO_1000054570" description="Large ribosomal subunit protein uL16">
    <location>
        <begin position="1"/>
        <end position="138"/>
    </location>
</feature>
<feature type="region of interest" description="Disordered" evidence="2">
    <location>
        <begin position="1"/>
        <end position="22"/>
    </location>
</feature>
<feature type="compositionally biased region" description="Basic residues" evidence="2">
    <location>
        <begin position="1"/>
        <end position="13"/>
    </location>
</feature>
<keyword id="KW-0687">Ribonucleoprotein</keyword>
<keyword id="KW-0689">Ribosomal protein</keyword>
<keyword id="KW-0694">RNA-binding</keyword>
<keyword id="KW-0699">rRNA-binding</keyword>
<keyword id="KW-0820">tRNA-binding</keyword>
<reference key="1">
    <citation type="submission" date="2006-12" db="EMBL/GenBank/DDBJ databases">
        <title>Complete sequence of chromosome 1 of Acidovorax sp. JS42.</title>
        <authorList>
            <person name="Copeland A."/>
            <person name="Lucas S."/>
            <person name="Lapidus A."/>
            <person name="Barry K."/>
            <person name="Detter J.C."/>
            <person name="Glavina del Rio T."/>
            <person name="Dalin E."/>
            <person name="Tice H."/>
            <person name="Pitluck S."/>
            <person name="Chertkov O."/>
            <person name="Brettin T."/>
            <person name="Bruce D."/>
            <person name="Han C."/>
            <person name="Tapia R."/>
            <person name="Gilna P."/>
            <person name="Schmutz J."/>
            <person name="Larimer F."/>
            <person name="Land M."/>
            <person name="Hauser L."/>
            <person name="Kyrpides N."/>
            <person name="Kim E."/>
            <person name="Stahl D."/>
            <person name="Richardson P."/>
        </authorList>
    </citation>
    <scope>NUCLEOTIDE SEQUENCE [LARGE SCALE GENOMIC DNA]</scope>
    <source>
        <strain>JS42</strain>
    </source>
</reference>
<accession>A1W2R4</accession>
<organism>
    <name type="scientific">Acidovorax sp. (strain JS42)</name>
    <dbReference type="NCBI Taxonomy" id="232721"/>
    <lineage>
        <taxon>Bacteria</taxon>
        <taxon>Pseudomonadati</taxon>
        <taxon>Pseudomonadota</taxon>
        <taxon>Betaproteobacteria</taxon>
        <taxon>Burkholderiales</taxon>
        <taxon>Comamonadaceae</taxon>
        <taxon>Acidovorax</taxon>
    </lineage>
</organism>
<gene>
    <name evidence="1" type="primary">rplP</name>
    <name type="ordered locus">Ajs_0285</name>
</gene>
<sequence>MLQPARRKFRKEQKGRNTGVATRGNSVAFGDFGLKCTDRGRLTARQIEAARRAISRHVKRGGRIWIRVFPDKPISTKPAEVRMGNGKGNPEYYVAEIQPGKVVFEIVGVPEELAREAFRLAAAKLPLRTTFVARQIGA</sequence>